<dbReference type="EC" id="1.2.1.12" evidence="2"/>
<dbReference type="EMBL" id="U28761">
    <property type="protein sequence ID" value="AAA99734.1"/>
    <property type="molecule type" value="Genomic_DNA"/>
</dbReference>
<dbReference type="STRING" id="140.A0V01_04045"/>
<dbReference type="UniPathway" id="UPA00109">
    <property type="reaction ID" value="UER00184"/>
</dbReference>
<dbReference type="GO" id="GO:0005737">
    <property type="term" value="C:cytoplasm"/>
    <property type="evidence" value="ECO:0007669"/>
    <property type="project" value="UniProtKB-SubCell"/>
</dbReference>
<dbReference type="GO" id="GO:0004365">
    <property type="term" value="F:glyceraldehyde-3-phosphate dehydrogenase (NAD+) (phosphorylating) activity"/>
    <property type="evidence" value="ECO:0000250"/>
    <property type="project" value="UniProtKB"/>
</dbReference>
<dbReference type="GO" id="GO:0051287">
    <property type="term" value="F:NAD binding"/>
    <property type="evidence" value="ECO:0000250"/>
    <property type="project" value="UniProtKB"/>
</dbReference>
<dbReference type="GO" id="GO:0006096">
    <property type="term" value="P:glycolytic process"/>
    <property type="evidence" value="ECO:0007669"/>
    <property type="project" value="UniProtKB-UniPathway"/>
</dbReference>
<dbReference type="CDD" id="cd18126">
    <property type="entry name" value="GAPDH_I_C"/>
    <property type="match status" value="1"/>
</dbReference>
<dbReference type="CDD" id="cd05214">
    <property type="entry name" value="GAPDH_I_N"/>
    <property type="match status" value="1"/>
</dbReference>
<dbReference type="FunFam" id="3.30.360.10:FF:000002">
    <property type="entry name" value="Glyceraldehyde-3-phosphate dehydrogenase"/>
    <property type="match status" value="1"/>
</dbReference>
<dbReference type="FunFam" id="3.40.50.720:FF:000001">
    <property type="entry name" value="Glyceraldehyde-3-phosphate dehydrogenase"/>
    <property type="match status" value="1"/>
</dbReference>
<dbReference type="Gene3D" id="3.30.360.10">
    <property type="entry name" value="Dihydrodipicolinate Reductase, domain 2"/>
    <property type="match status" value="1"/>
</dbReference>
<dbReference type="Gene3D" id="3.40.50.720">
    <property type="entry name" value="NAD(P)-binding Rossmann-like Domain"/>
    <property type="match status" value="1"/>
</dbReference>
<dbReference type="InterPro" id="IPR020831">
    <property type="entry name" value="GlycerAld/Erythrose_P_DH"/>
</dbReference>
<dbReference type="InterPro" id="IPR020830">
    <property type="entry name" value="GlycerAld_3-P_DH_AS"/>
</dbReference>
<dbReference type="InterPro" id="IPR020829">
    <property type="entry name" value="GlycerAld_3-P_DH_cat"/>
</dbReference>
<dbReference type="InterPro" id="IPR020828">
    <property type="entry name" value="GlycerAld_3-P_DH_NAD(P)-bd"/>
</dbReference>
<dbReference type="InterPro" id="IPR036291">
    <property type="entry name" value="NAD(P)-bd_dom_sf"/>
</dbReference>
<dbReference type="PANTHER" id="PTHR43148">
    <property type="entry name" value="GLYCERALDEHYDE-3-PHOSPHATE DEHYDROGENASE 2"/>
    <property type="match status" value="1"/>
</dbReference>
<dbReference type="Pfam" id="PF02800">
    <property type="entry name" value="Gp_dh_C"/>
    <property type="match status" value="1"/>
</dbReference>
<dbReference type="Pfam" id="PF00044">
    <property type="entry name" value="Gp_dh_N"/>
    <property type="match status" value="1"/>
</dbReference>
<dbReference type="PRINTS" id="PR00078">
    <property type="entry name" value="G3PDHDRGNASE"/>
</dbReference>
<dbReference type="SMART" id="SM00846">
    <property type="entry name" value="Gp_dh_N"/>
    <property type="match status" value="1"/>
</dbReference>
<dbReference type="SUPFAM" id="SSF55347">
    <property type="entry name" value="Glyceraldehyde-3-phosphate dehydrogenase-like, C-terminal domain"/>
    <property type="match status" value="1"/>
</dbReference>
<dbReference type="SUPFAM" id="SSF51735">
    <property type="entry name" value="NAD(P)-binding Rossmann-fold domains"/>
    <property type="match status" value="1"/>
</dbReference>
<dbReference type="PROSITE" id="PS00071">
    <property type="entry name" value="GAPDH"/>
    <property type="match status" value="1"/>
</dbReference>
<name>G3P_BORHE</name>
<feature type="chain" id="PRO_0000145637" description="Glyceraldehyde-3-phosphate dehydrogenase">
    <location>
        <begin position="1" status="less than"/>
        <end position="264" status="greater than"/>
    </location>
</feature>
<feature type="region of interest" description="Disordered" evidence="4">
    <location>
        <begin position="245"/>
        <end position="264"/>
    </location>
</feature>
<feature type="active site" description="Nucleophile" evidence="3">
    <location>
        <position position="124"/>
    </location>
</feature>
<feature type="binding site" evidence="3">
    <location>
        <position position="45"/>
    </location>
    <ligand>
        <name>NAD(+)</name>
        <dbReference type="ChEBI" id="CHEBI:57540"/>
    </ligand>
</feature>
<feature type="binding site" evidence="3">
    <location>
        <position position="93"/>
    </location>
    <ligand>
        <name>NAD(+)</name>
        <dbReference type="ChEBI" id="CHEBI:57540"/>
    </ligand>
</feature>
<feature type="binding site" evidence="3">
    <location>
        <begin position="123"/>
        <end position="125"/>
    </location>
    <ligand>
        <name>D-glyceraldehyde 3-phosphate</name>
        <dbReference type="ChEBI" id="CHEBI:59776"/>
    </ligand>
</feature>
<feature type="binding site" evidence="3">
    <location>
        <position position="154"/>
    </location>
    <ligand>
        <name>D-glyceraldehyde 3-phosphate</name>
        <dbReference type="ChEBI" id="CHEBI:59776"/>
    </ligand>
</feature>
<feature type="binding site" evidence="3">
    <location>
        <position position="155"/>
    </location>
    <ligand>
        <name>NAD(+)</name>
        <dbReference type="ChEBI" id="CHEBI:57540"/>
    </ligand>
</feature>
<feature type="binding site" evidence="3">
    <location>
        <position position="169"/>
    </location>
    <ligand>
        <name>D-glyceraldehyde 3-phosphate</name>
        <dbReference type="ChEBI" id="CHEBI:59776"/>
    </ligand>
</feature>
<feature type="binding site" evidence="3">
    <location>
        <begin position="182"/>
        <end position="183"/>
    </location>
    <ligand>
        <name>D-glyceraldehyde 3-phosphate</name>
        <dbReference type="ChEBI" id="CHEBI:59776"/>
    </ligand>
</feature>
<feature type="binding site" evidence="3">
    <location>
        <position position="205"/>
    </location>
    <ligand>
        <name>D-glyceraldehyde 3-phosphate</name>
        <dbReference type="ChEBI" id="CHEBI:59776"/>
    </ligand>
</feature>
<feature type="site" description="Activates thiol group during catalysis" evidence="3">
    <location>
        <position position="151"/>
    </location>
</feature>
<feature type="non-terminal residue">
    <location>
        <position position="1"/>
    </location>
</feature>
<feature type="non-terminal residue">
    <location>
        <position position="264"/>
    </location>
</feature>
<gene>
    <name type="primary">gap</name>
</gene>
<proteinExistence type="inferred from homology"/>
<protein>
    <recommendedName>
        <fullName evidence="1">Glyceraldehyde-3-phosphate dehydrogenase</fullName>
        <shortName evidence="1">GAPDH</shortName>
        <ecNumber evidence="2">1.2.1.12</ecNumber>
    </recommendedName>
    <alternativeName>
        <fullName evidence="1">NAD-dependent glyceraldehyde-3-phosphate dehydrogenase</fullName>
    </alternativeName>
</protein>
<keyword id="KW-0963">Cytoplasm</keyword>
<keyword id="KW-0324">Glycolysis</keyword>
<keyword id="KW-0520">NAD</keyword>
<keyword id="KW-0547">Nucleotide-binding</keyword>
<keyword id="KW-0560">Oxidoreductase</keyword>
<accession>P46796</accession>
<reference key="1">
    <citation type="journal article" date="1996" name="Infect. Immun.">
        <title>A glyceraldehyde-3-phosphate dehydrogenase homolog in Borrelia burgdorferi and Borrelia hermsii.</title>
        <authorList>
            <person name="Anda P."/>
            <person name="Gebbia J.A."/>
            <person name="Backenson P.B."/>
            <person name="Coleman J.L."/>
            <person name="Benach J.L."/>
        </authorList>
    </citation>
    <scope>NUCLEOTIDE SEQUENCE [GENOMIC DNA]</scope>
</reference>
<evidence type="ECO:0000250" key="1">
    <source>
        <dbReference type="UniProtKB" id="P00362"/>
    </source>
</evidence>
<evidence type="ECO:0000250" key="2">
    <source>
        <dbReference type="UniProtKB" id="P09124"/>
    </source>
</evidence>
<evidence type="ECO:0000250" key="3">
    <source>
        <dbReference type="UniProtKB" id="P46795"/>
    </source>
</evidence>
<evidence type="ECO:0000256" key="4">
    <source>
        <dbReference type="SAM" id="MobiDB-lite"/>
    </source>
</evidence>
<evidence type="ECO:0000305" key="5"/>
<comment type="function">
    <text evidence="1">Catalyzes the oxidative phosphorylation of glyceraldehyde 3-phosphate (G3P) to 1,3-bisphosphoglycerate (BPG) using the cofactor NAD. The first reaction step involves the formation of a hemiacetal intermediate between G3P and a cysteine residue, and this hemiacetal intermediate is then oxidized to a thioester, with concomitant reduction of NAD to NADH. The reduced NADH is then exchanged with the second NAD, and the thioester is attacked by a nucleophilic inorganic phosphate to produce BPG.</text>
</comment>
<comment type="catalytic activity">
    <reaction evidence="2">
        <text>D-glyceraldehyde 3-phosphate + phosphate + NAD(+) = (2R)-3-phospho-glyceroyl phosphate + NADH + H(+)</text>
        <dbReference type="Rhea" id="RHEA:10300"/>
        <dbReference type="ChEBI" id="CHEBI:15378"/>
        <dbReference type="ChEBI" id="CHEBI:43474"/>
        <dbReference type="ChEBI" id="CHEBI:57540"/>
        <dbReference type="ChEBI" id="CHEBI:57604"/>
        <dbReference type="ChEBI" id="CHEBI:57945"/>
        <dbReference type="ChEBI" id="CHEBI:59776"/>
        <dbReference type="EC" id="1.2.1.12"/>
    </reaction>
</comment>
<comment type="pathway">
    <text evidence="5">Carbohydrate degradation; glycolysis; pyruvate from D-glyceraldehyde 3-phosphate: step 1/5.</text>
</comment>
<comment type="subunit">
    <text evidence="3">Homotetramer.</text>
</comment>
<comment type="subcellular location">
    <subcellularLocation>
        <location evidence="5">Cytoplasm</location>
    </subcellularLocation>
</comment>
<comment type="similarity">
    <text evidence="5">Belongs to the glyceraldehyde-3-phosphate dehydrogenase family.</text>
</comment>
<organism>
    <name type="scientific">Borrelia hermsii</name>
    <dbReference type="NCBI Taxonomy" id="140"/>
    <lineage>
        <taxon>Bacteria</taxon>
        <taxon>Pseudomonadati</taxon>
        <taxon>Spirochaetota</taxon>
        <taxon>Spirochaetia</taxon>
        <taxon>Spirochaetales</taxon>
        <taxon>Borreliaceae</taxon>
        <taxon>Borrelia</taxon>
    </lineage>
</organism>
<sequence length="264" mass="28241">RFTDPKTLAHLLKYDSTFGVYNKKVESRDGAIVVDGREIKIIAERDPKNLPWGKLGXDVVIESTGVFSSATSDKGGYLDHVEAGAGAKKVILTAPAKDEIKTIXLGVXDHDINXDLKAVSNASCTTNCLAPLAKVLHESFGIEQGLMTTVHAYTNXQRILDLPHSDLRRARAAALSIIPTSTGAAKAVGLVLPELKGKLNGTSMRVPVPTGSIVDLTVQLKKKDVTKEEINSVLKKASETPELNGILGYTEDPXVSSDXKGNSH</sequence>